<gene>
    <name evidence="1" type="primary">idi</name>
    <name type="ordered locus">AAur_0321</name>
</gene>
<reference key="1">
    <citation type="journal article" date="2006" name="PLoS Genet.">
        <title>Secrets of soil survival revealed by the genome sequence of Arthrobacter aurescens TC1.</title>
        <authorList>
            <person name="Mongodin E.F."/>
            <person name="Shapir N."/>
            <person name="Daugherty S.C."/>
            <person name="DeBoy R.T."/>
            <person name="Emerson J.B."/>
            <person name="Shvartzbeyn A."/>
            <person name="Radune D."/>
            <person name="Vamathevan J."/>
            <person name="Riggs F."/>
            <person name="Grinberg V."/>
            <person name="Khouri H.M."/>
            <person name="Wackett L.P."/>
            <person name="Nelson K.E."/>
            <person name="Sadowsky M.J."/>
        </authorList>
    </citation>
    <scope>NUCLEOTIDE SEQUENCE [LARGE SCALE GENOMIC DNA]</scope>
    <source>
        <strain>TC1</strain>
    </source>
</reference>
<keyword id="KW-0963">Cytoplasm</keyword>
<keyword id="KW-0413">Isomerase</keyword>
<keyword id="KW-0414">Isoprene biosynthesis</keyword>
<keyword id="KW-0460">Magnesium</keyword>
<keyword id="KW-0464">Manganese</keyword>
<keyword id="KW-0479">Metal-binding</keyword>
<protein>
    <recommendedName>
        <fullName evidence="1">Isopentenyl-diphosphate Delta-isomerase</fullName>
        <shortName evidence="1">IPP isomerase</shortName>
        <ecNumber evidence="1">5.3.3.2</ecNumber>
    </recommendedName>
    <alternativeName>
        <fullName evidence="1">IPP:DMAPP isomerase</fullName>
    </alternativeName>
    <alternativeName>
        <fullName evidence="1">Isopentenyl pyrophosphate isomerase</fullName>
    </alternativeName>
</protein>
<evidence type="ECO:0000255" key="1">
    <source>
        <dbReference type="HAMAP-Rule" id="MF_00202"/>
    </source>
</evidence>
<proteinExistence type="inferred from homology"/>
<dbReference type="EC" id="5.3.3.2" evidence="1"/>
<dbReference type="EMBL" id="CP000474">
    <property type="protein sequence ID" value="ABM06566.1"/>
    <property type="molecule type" value="Genomic_DNA"/>
</dbReference>
<dbReference type="RefSeq" id="WP_011773086.1">
    <property type="nucleotide sequence ID" value="NC_008711.1"/>
</dbReference>
<dbReference type="SMR" id="A1R1M6"/>
<dbReference type="STRING" id="290340.AAur_0321"/>
<dbReference type="KEGG" id="aau:AAur_0321"/>
<dbReference type="eggNOG" id="COG1443">
    <property type="taxonomic scope" value="Bacteria"/>
</dbReference>
<dbReference type="HOGENOM" id="CLU_060552_2_0_11"/>
<dbReference type="OrthoDB" id="9809458at2"/>
<dbReference type="UniPathway" id="UPA00059">
    <property type="reaction ID" value="UER00104"/>
</dbReference>
<dbReference type="Proteomes" id="UP000000637">
    <property type="component" value="Chromosome"/>
</dbReference>
<dbReference type="GO" id="GO:0005737">
    <property type="term" value="C:cytoplasm"/>
    <property type="evidence" value="ECO:0007669"/>
    <property type="project" value="UniProtKB-SubCell"/>
</dbReference>
<dbReference type="GO" id="GO:0004452">
    <property type="term" value="F:isopentenyl-diphosphate delta-isomerase activity"/>
    <property type="evidence" value="ECO:0007669"/>
    <property type="project" value="UniProtKB-UniRule"/>
</dbReference>
<dbReference type="GO" id="GO:0046872">
    <property type="term" value="F:metal ion binding"/>
    <property type="evidence" value="ECO:0007669"/>
    <property type="project" value="UniProtKB-KW"/>
</dbReference>
<dbReference type="GO" id="GO:0050992">
    <property type="term" value="P:dimethylallyl diphosphate biosynthetic process"/>
    <property type="evidence" value="ECO:0007669"/>
    <property type="project" value="UniProtKB-UniRule"/>
</dbReference>
<dbReference type="GO" id="GO:0008299">
    <property type="term" value="P:isoprenoid biosynthetic process"/>
    <property type="evidence" value="ECO:0007669"/>
    <property type="project" value="UniProtKB-KW"/>
</dbReference>
<dbReference type="CDD" id="cd02885">
    <property type="entry name" value="NUDIX_IPP_Isomerase"/>
    <property type="match status" value="1"/>
</dbReference>
<dbReference type="FunFam" id="3.90.79.10:FF:000009">
    <property type="entry name" value="Isopentenyl-diphosphate Delta-isomerase"/>
    <property type="match status" value="1"/>
</dbReference>
<dbReference type="Gene3D" id="3.90.79.10">
    <property type="entry name" value="Nucleoside Triphosphate Pyrophosphohydrolase"/>
    <property type="match status" value="1"/>
</dbReference>
<dbReference type="HAMAP" id="MF_00202">
    <property type="entry name" value="Idi"/>
    <property type="match status" value="1"/>
</dbReference>
<dbReference type="InterPro" id="IPR056375">
    <property type="entry name" value="Idi_bact"/>
</dbReference>
<dbReference type="InterPro" id="IPR011876">
    <property type="entry name" value="IsopentenylPP_isomerase_typ1"/>
</dbReference>
<dbReference type="InterPro" id="IPR015797">
    <property type="entry name" value="NUDIX_hydrolase-like_dom_sf"/>
</dbReference>
<dbReference type="InterPro" id="IPR000086">
    <property type="entry name" value="NUDIX_hydrolase_dom"/>
</dbReference>
<dbReference type="NCBIfam" id="TIGR02150">
    <property type="entry name" value="IPP_isom_1"/>
    <property type="match status" value="1"/>
</dbReference>
<dbReference type="NCBIfam" id="NF002995">
    <property type="entry name" value="PRK03759.1"/>
    <property type="match status" value="1"/>
</dbReference>
<dbReference type="PANTHER" id="PTHR10885">
    <property type="entry name" value="ISOPENTENYL-DIPHOSPHATE DELTA-ISOMERASE"/>
    <property type="match status" value="1"/>
</dbReference>
<dbReference type="PANTHER" id="PTHR10885:SF0">
    <property type="entry name" value="ISOPENTENYL-DIPHOSPHATE DELTA-ISOMERASE"/>
    <property type="match status" value="1"/>
</dbReference>
<dbReference type="Pfam" id="PF00293">
    <property type="entry name" value="NUDIX"/>
    <property type="match status" value="1"/>
</dbReference>
<dbReference type="PIRSF" id="PIRSF018427">
    <property type="entry name" value="Isopntndiph_ism"/>
    <property type="match status" value="1"/>
</dbReference>
<dbReference type="SUPFAM" id="SSF55811">
    <property type="entry name" value="Nudix"/>
    <property type="match status" value="1"/>
</dbReference>
<dbReference type="PROSITE" id="PS51462">
    <property type="entry name" value="NUDIX"/>
    <property type="match status" value="1"/>
</dbReference>
<sequence length="184" mass="20003">MNATEMVVLLDDAGTPIGEAPKAGVHTLDTPLHLAFSCYLINDVGEVLLTRRSPEKKTWPGVWTNSFCGHPGPGEEFEDAILRRAQFELGVDANKIELVLPHFRYRAIDPTGIVENEVCPVYVARITGVLNPNPAEVADWAWISPALLADALEHTPSAFSPWLGLQFPQLLEANALPLQAGAEA</sequence>
<comment type="function">
    <text evidence="1">Catalyzes the 1,3-allylic rearrangement of the homoallylic substrate isopentenyl (IPP) to its highly electrophilic allylic isomer, dimethylallyl diphosphate (DMAPP).</text>
</comment>
<comment type="catalytic activity">
    <reaction evidence="1">
        <text>isopentenyl diphosphate = dimethylallyl diphosphate</text>
        <dbReference type="Rhea" id="RHEA:23284"/>
        <dbReference type="ChEBI" id="CHEBI:57623"/>
        <dbReference type="ChEBI" id="CHEBI:128769"/>
        <dbReference type="EC" id="5.3.3.2"/>
    </reaction>
</comment>
<comment type="cofactor">
    <cofactor evidence="1">
        <name>Mg(2+)</name>
        <dbReference type="ChEBI" id="CHEBI:18420"/>
    </cofactor>
    <text evidence="1">Binds 1 Mg(2+) ion per subunit. The magnesium ion binds only when substrate is bound.</text>
</comment>
<comment type="cofactor">
    <cofactor evidence="1">
        <name>Mn(2+)</name>
        <dbReference type="ChEBI" id="CHEBI:29035"/>
    </cofactor>
    <text evidence="1">Binds 1 Mn(2+) ion per subunit.</text>
</comment>
<comment type="pathway">
    <text evidence="1">Isoprenoid biosynthesis; dimethylallyl diphosphate biosynthesis; dimethylallyl diphosphate from isopentenyl diphosphate: step 1/1.</text>
</comment>
<comment type="subcellular location">
    <subcellularLocation>
        <location evidence="1">Cytoplasm</location>
    </subcellularLocation>
</comment>
<comment type="similarity">
    <text evidence="1">Belongs to the IPP isomerase type 1 family.</text>
</comment>
<feature type="chain" id="PRO_1000077739" description="Isopentenyl-diphosphate Delta-isomerase">
    <location>
        <begin position="1"/>
        <end position="184"/>
    </location>
</feature>
<feature type="domain" description="Nudix hydrolase">
    <location>
        <begin position="31"/>
        <end position="165"/>
    </location>
</feature>
<feature type="active site" evidence="1">
    <location>
        <position position="68"/>
    </location>
</feature>
<feature type="active site" evidence="1">
    <location>
        <position position="117"/>
    </location>
</feature>
<feature type="binding site" evidence="1">
    <location>
        <position position="26"/>
    </location>
    <ligand>
        <name>Mn(2+)</name>
        <dbReference type="ChEBI" id="CHEBI:29035"/>
    </ligand>
</feature>
<feature type="binding site" evidence="1">
    <location>
        <position position="33"/>
    </location>
    <ligand>
        <name>Mn(2+)</name>
        <dbReference type="ChEBI" id="CHEBI:29035"/>
    </ligand>
</feature>
<feature type="binding site" evidence="1">
    <location>
        <position position="70"/>
    </location>
    <ligand>
        <name>Mn(2+)</name>
        <dbReference type="ChEBI" id="CHEBI:29035"/>
    </ligand>
</feature>
<feature type="binding site" evidence="1">
    <location>
        <position position="88"/>
    </location>
    <ligand>
        <name>Mg(2+)</name>
        <dbReference type="ChEBI" id="CHEBI:18420"/>
    </ligand>
</feature>
<feature type="binding site" evidence="1">
    <location>
        <position position="115"/>
    </location>
    <ligand>
        <name>Mn(2+)</name>
        <dbReference type="ChEBI" id="CHEBI:29035"/>
    </ligand>
</feature>
<feature type="binding site" evidence="1">
    <location>
        <position position="117"/>
    </location>
    <ligand>
        <name>Mn(2+)</name>
        <dbReference type="ChEBI" id="CHEBI:29035"/>
    </ligand>
</feature>
<organism>
    <name type="scientific">Paenarthrobacter aurescens (strain TC1)</name>
    <dbReference type="NCBI Taxonomy" id="290340"/>
    <lineage>
        <taxon>Bacteria</taxon>
        <taxon>Bacillati</taxon>
        <taxon>Actinomycetota</taxon>
        <taxon>Actinomycetes</taxon>
        <taxon>Micrococcales</taxon>
        <taxon>Micrococcaceae</taxon>
        <taxon>Paenarthrobacter</taxon>
    </lineage>
</organism>
<name>IDI_PAEAT</name>
<accession>A1R1M6</accession>